<accession>A8LKS9</accession>
<keyword id="KW-0028">Amino-acid biosynthesis</keyword>
<keyword id="KW-0057">Aromatic amino acid biosynthesis</keyword>
<keyword id="KW-0456">Lyase</keyword>
<keyword id="KW-1185">Reference proteome</keyword>
<proteinExistence type="inferred from homology"/>
<comment type="function">
    <text evidence="1">Catalyzes a trans-dehydration via an enolate intermediate.</text>
</comment>
<comment type="catalytic activity">
    <reaction evidence="1">
        <text>3-dehydroquinate = 3-dehydroshikimate + H2O</text>
        <dbReference type="Rhea" id="RHEA:21096"/>
        <dbReference type="ChEBI" id="CHEBI:15377"/>
        <dbReference type="ChEBI" id="CHEBI:16630"/>
        <dbReference type="ChEBI" id="CHEBI:32364"/>
        <dbReference type="EC" id="4.2.1.10"/>
    </reaction>
</comment>
<comment type="pathway">
    <text evidence="1">Metabolic intermediate biosynthesis; chorismate biosynthesis; chorismate from D-erythrose 4-phosphate and phosphoenolpyruvate: step 3/7.</text>
</comment>
<comment type="subunit">
    <text evidence="1">Homododecamer.</text>
</comment>
<comment type="similarity">
    <text evidence="1">Belongs to the type-II 3-dehydroquinase family.</text>
</comment>
<sequence length="150" mass="16040">MHITILNGPNLNLLGTRQPEVYGATTLADIEHMCQRKAQALGLEIEFNQTNHEGVLIDQIHAARSESDGLIINAGAYTHTSVALMDAVASVSLPTVEVHLSNIHARESFRHTSFLSPVALGLICGFGATGYVMALDGIWAHLTAADSARP</sequence>
<evidence type="ECO:0000255" key="1">
    <source>
        <dbReference type="HAMAP-Rule" id="MF_00169"/>
    </source>
</evidence>
<reference key="1">
    <citation type="journal article" date="2010" name="ISME J.">
        <title>The complete genome sequence of the algal symbiont Dinoroseobacter shibae: a hitchhiker's guide to life in the sea.</title>
        <authorList>
            <person name="Wagner-Dobler I."/>
            <person name="Ballhausen B."/>
            <person name="Berger M."/>
            <person name="Brinkhoff T."/>
            <person name="Buchholz I."/>
            <person name="Bunk B."/>
            <person name="Cypionka H."/>
            <person name="Daniel R."/>
            <person name="Drepper T."/>
            <person name="Gerdts G."/>
            <person name="Hahnke S."/>
            <person name="Han C."/>
            <person name="Jahn D."/>
            <person name="Kalhoefer D."/>
            <person name="Kiss H."/>
            <person name="Klenk H.P."/>
            <person name="Kyrpides N."/>
            <person name="Liebl W."/>
            <person name="Liesegang H."/>
            <person name="Meincke L."/>
            <person name="Pati A."/>
            <person name="Petersen J."/>
            <person name="Piekarski T."/>
            <person name="Pommerenke C."/>
            <person name="Pradella S."/>
            <person name="Pukall R."/>
            <person name="Rabus R."/>
            <person name="Stackebrandt E."/>
            <person name="Thole S."/>
            <person name="Thompson L."/>
            <person name="Tielen P."/>
            <person name="Tomasch J."/>
            <person name="von Jan M."/>
            <person name="Wanphrut N."/>
            <person name="Wichels A."/>
            <person name="Zech H."/>
            <person name="Simon M."/>
        </authorList>
    </citation>
    <scope>NUCLEOTIDE SEQUENCE [LARGE SCALE GENOMIC DNA]</scope>
    <source>
        <strain>DSM 16493 / NCIMB 14021 / DFL 12</strain>
    </source>
</reference>
<feature type="chain" id="PRO_1000097598" description="3-dehydroquinate dehydratase">
    <location>
        <begin position="1"/>
        <end position="150"/>
    </location>
</feature>
<feature type="active site" description="Proton acceptor" evidence="1">
    <location>
        <position position="22"/>
    </location>
</feature>
<feature type="active site" description="Proton donor" evidence="1">
    <location>
        <position position="99"/>
    </location>
</feature>
<feature type="binding site" evidence="1">
    <location>
        <position position="73"/>
    </location>
    <ligand>
        <name>substrate</name>
    </ligand>
</feature>
<feature type="binding site" evidence="1">
    <location>
        <position position="79"/>
    </location>
    <ligand>
        <name>substrate</name>
    </ligand>
</feature>
<feature type="binding site" evidence="1">
    <location>
        <position position="86"/>
    </location>
    <ligand>
        <name>substrate</name>
    </ligand>
</feature>
<feature type="binding site" evidence="1">
    <location>
        <begin position="100"/>
        <end position="101"/>
    </location>
    <ligand>
        <name>substrate</name>
    </ligand>
</feature>
<feature type="binding site" evidence="1">
    <location>
        <position position="110"/>
    </location>
    <ligand>
        <name>substrate</name>
    </ligand>
</feature>
<feature type="site" description="Transition state stabilizer" evidence="1">
    <location>
        <position position="17"/>
    </location>
</feature>
<gene>
    <name evidence="1" type="primary">aroQ</name>
    <name type="ordered locus">Dshi_1551</name>
</gene>
<name>AROQ_DINSH</name>
<protein>
    <recommendedName>
        <fullName evidence="1">3-dehydroquinate dehydratase</fullName>
        <shortName evidence="1">3-dehydroquinase</shortName>
        <ecNumber evidence="1">4.2.1.10</ecNumber>
    </recommendedName>
    <alternativeName>
        <fullName evidence="1">Type II DHQase</fullName>
    </alternativeName>
</protein>
<dbReference type="EC" id="4.2.1.10" evidence="1"/>
<dbReference type="EMBL" id="CP000830">
    <property type="protein sequence ID" value="ABV93293.1"/>
    <property type="molecule type" value="Genomic_DNA"/>
</dbReference>
<dbReference type="RefSeq" id="WP_012178223.1">
    <property type="nucleotide sequence ID" value="NC_009952.1"/>
</dbReference>
<dbReference type="SMR" id="A8LKS9"/>
<dbReference type="STRING" id="398580.Dshi_1551"/>
<dbReference type="KEGG" id="dsh:Dshi_1551"/>
<dbReference type="eggNOG" id="COG0757">
    <property type="taxonomic scope" value="Bacteria"/>
</dbReference>
<dbReference type="HOGENOM" id="CLU_090968_1_0_5"/>
<dbReference type="OrthoDB" id="9790793at2"/>
<dbReference type="UniPathway" id="UPA00053">
    <property type="reaction ID" value="UER00086"/>
</dbReference>
<dbReference type="Proteomes" id="UP000006833">
    <property type="component" value="Chromosome"/>
</dbReference>
<dbReference type="GO" id="GO:0003855">
    <property type="term" value="F:3-dehydroquinate dehydratase activity"/>
    <property type="evidence" value="ECO:0007669"/>
    <property type="project" value="UniProtKB-UniRule"/>
</dbReference>
<dbReference type="GO" id="GO:0008652">
    <property type="term" value="P:amino acid biosynthetic process"/>
    <property type="evidence" value="ECO:0007669"/>
    <property type="project" value="UniProtKB-KW"/>
</dbReference>
<dbReference type="GO" id="GO:0009073">
    <property type="term" value="P:aromatic amino acid family biosynthetic process"/>
    <property type="evidence" value="ECO:0007669"/>
    <property type="project" value="UniProtKB-KW"/>
</dbReference>
<dbReference type="GO" id="GO:0009423">
    <property type="term" value="P:chorismate biosynthetic process"/>
    <property type="evidence" value="ECO:0007669"/>
    <property type="project" value="UniProtKB-UniRule"/>
</dbReference>
<dbReference type="GO" id="GO:0019631">
    <property type="term" value="P:quinate catabolic process"/>
    <property type="evidence" value="ECO:0007669"/>
    <property type="project" value="TreeGrafter"/>
</dbReference>
<dbReference type="CDD" id="cd00466">
    <property type="entry name" value="DHQase_II"/>
    <property type="match status" value="1"/>
</dbReference>
<dbReference type="Gene3D" id="3.40.50.9100">
    <property type="entry name" value="Dehydroquinase, class II"/>
    <property type="match status" value="1"/>
</dbReference>
<dbReference type="HAMAP" id="MF_00169">
    <property type="entry name" value="AroQ"/>
    <property type="match status" value="1"/>
</dbReference>
<dbReference type="InterPro" id="IPR001874">
    <property type="entry name" value="DHquinase_II"/>
</dbReference>
<dbReference type="InterPro" id="IPR018509">
    <property type="entry name" value="DHquinase_II_CS"/>
</dbReference>
<dbReference type="InterPro" id="IPR036441">
    <property type="entry name" value="DHquinase_II_sf"/>
</dbReference>
<dbReference type="NCBIfam" id="TIGR01088">
    <property type="entry name" value="aroQ"/>
    <property type="match status" value="1"/>
</dbReference>
<dbReference type="NCBIfam" id="NF003805">
    <property type="entry name" value="PRK05395.1-2"/>
    <property type="match status" value="1"/>
</dbReference>
<dbReference type="NCBIfam" id="NF003806">
    <property type="entry name" value="PRK05395.1-3"/>
    <property type="match status" value="1"/>
</dbReference>
<dbReference type="NCBIfam" id="NF003807">
    <property type="entry name" value="PRK05395.1-4"/>
    <property type="match status" value="1"/>
</dbReference>
<dbReference type="PANTHER" id="PTHR21272">
    <property type="entry name" value="CATABOLIC 3-DEHYDROQUINASE"/>
    <property type="match status" value="1"/>
</dbReference>
<dbReference type="PANTHER" id="PTHR21272:SF3">
    <property type="entry name" value="CATABOLIC 3-DEHYDROQUINASE"/>
    <property type="match status" value="1"/>
</dbReference>
<dbReference type="Pfam" id="PF01220">
    <property type="entry name" value="DHquinase_II"/>
    <property type="match status" value="1"/>
</dbReference>
<dbReference type="PIRSF" id="PIRSF001399">
    <property type="entry name" value="DHquinase_II"/>
    <property type="match status" value="1"/>
</dbReference>
<dbReference type="SUPFAM" id="SSF52304">
    <property type="entry name" value="Type II 3-dehydroquinate dehydratase"/>
    <property type="match status" value="1"/>
</dbReference>
<dbReference type="PROSITE" id="PS01029">
    <property type="entry name" value="DEHYDROQUINASE_II"/>
    <property type="match status" value="1"/>
</dbReference>
<organism>
    <name type="scientific">Dinoroseobacter shibae (strain DSM 16493 / NCIMB 14021 / DFL 12)</name>
    <dbReference type="NCBI Taxonomy" id="398580"/>
    <lineage>
        <taxon>Bacteria</taxon>
        <taxon>Pseudomonadati</taxon>
        <taxon>Pseudomonadota</taxon>
        <taxon>Alphaproteobacteria</taxon>
        <taxon>Rhodobacterales</taxon>
        <taxon>Roseobacteraceae</taxon>
        <taxon>Dinoroseobacter</taxon>
    </lineage>
</organism>